<sequence>MANILFLDNFDSFTYNLVDQFRVLGHNVTIYRNDCDLEKLVETALNTPDTILALSPGPGTPSEAGILLPLIERLKNQVPIIGVCLGHQALIQAFGGKVVHAGEVLHGKVSRISHDNEAMFKDLANPMPVARYHSLMGQDLPKEFIVNAEYNGIIMAIRHRDLPICAFQFHPESILTVQGSQLLQQSIEWLLNR</sequence>
<comment type="function">
    <text evidence="1">Part of a heterotetrameric complex that catalyzes the two-step biosynthesis of anthranilate, an intermediate in the biosynthesis of L-tryptophan. In the first step, the glutamine-binding beta subunit (TrpG) of anthranilate synthase (AS) provides the glutamine amidotransferase activity which generates ammonia as a substrate that, along with chorismate, is used in the second step, catalyzed by the large alpha subunit of AS (TrpE) to produce anthranilate. In the absence of TrpG, TrpE can synthesize anthranilate directly from chorismate and high concentrations of ammonia (By similarity).</text>
</comment>
<comment type="catalytic activity">
    <reaction>
        <text>chorismate + L-glutamine = anthranilate + pyruvate + L-glutamate + H(+)</text>
        <dbReference type="Rhea" id="RHEA:21732"/>
        <dbReference type="ChEBI" id="CHEBI:15361"/>
        <dbReference type="ChEBI" id="CHEBI:15378"/>
        <dbReference type="ChEBI" id="CHEBI:16567"/>
        <dbReference type="ChEBI" id="CHEBI:29748"/>
        <dbReference type="ChEBI" id="CHEBI:29985"/>
        <dbReference type="ChEBI" id="CHEBI:58359"/>
        <dbReference type="EC" id="4.1.3.27"/>
    </reaction>
</comment>
<comment type="pathway">
    <text>Amino-acid biosynthesis; L-tryptophan biosynthesis; L-tryptophan from chorismate: step 1/5.</text>
</comment>
<comment type="subunit">
    <text evidence="1">Heterotetramer consisting of two non-identical subunits: a beta subunit (TrpG) and a large alpha subunit (TrpE).</text>
</comment>
<accession>P71381</accession>
<gene>
    <name type="primary">trpG</name>
    <name type="ordered locus">HI_1388</name>
</gene>
<keyword id="KW-0028">Amino-acid biosynthesis</keyword>
<keyword id="KW-0057">Aromatic amino acid biosynthesis</keyword>
<keyword id="KW-0315">Glutamine amidotransferase</keyword>
<keyword id="KW-0456">Lyase</keyword>
<keyword id="KW-1185">Reference proteome</keyword>
<keyword id="KW-0822">Tryptophan biosynthesis</keyword>
<evidence type="ECO:0000250" key="1"/>
<evidence type="ECO:0000250" key="2">
    <source>
        <dbReference type="UniProtKB" id="P00900"/>
    </source>
</evidence>
<evidence type="ECO:0000255" key="3">
    <source>
        <dbReference type="PROSITE-ProRule" id="PRU00605"/>
    </source>
</evidence>
<feature type="chain" id="PRO_0000056878" description="Anthranilate synthase component 2">
    <location>
        <begin position="1"/>
        <end position="193"/>
    </location>
</feature>
<feature type="domain" description="Glutamine amidotransferase type-1" evidence="3">
    <location>
        <begin position="3"/>
        <end position="193"/>
    </location>
</feature>
<feature type="active site" description="Nucleophile; for GATase activity" evidence="3">
    <location>
        <position position="84"/>
    </location>
</feature>
<feature type="active site" description="For GATase activity" evidence="3">
    <location>
        <position position="170"/>
    </location>
</feature>
<feature type="active site" description="For GATase activity" evidence="3">
    <location>
        <position position="172"/>
    </location>
</feature>
<feature type="binding site" evidence="2">
    <location>
        <begin position="57"/>
        <end position="59"/>
    </location>
    <ligand>
        <name>L-glutamine</name>
        <dbReference type="ChEBI" id="CHEBI:58359"/>
    </ligand>
</feature>
<feature type="binding site" evidence="2">
    <location>
        <position position="88"/>
    </location>
    <ligand>
        <name>L-glutamine</name>
        <dbReference type="ChEBI" id="CHEBI:58359"/>
    </ligand>
</feature>
<feature type="binding site" evidence="2">
    <location>
        <begin position="134"/>
        <end position="135"/>
    </location>
    <ligand>
        <name>L-glutamine</name>
        <dbReference type="ChEBI" id="CHEBI:58359"/>
    </ligand>
</feature>
<organism>
    <name type="scientific">Haemophilus influenzae (strain ATCC 51907 / DSM 11121 / KW20 / Rd)</name>
    <dbReference type="NCBI Taxonomy" id="71421"/>
    <lineage>
        <taxon>Bacteria</taxon>
        <taxon>Pseudomonadati</taxon>
        <taxon>Pseudomonadota</taxon>
        <taxon>Gammaproteobacteria</taxon>
        <taxon>Pasteurellales</taxon>
        <taxon>Pasteurellaceae</taxon>
        <taxon>Haemophilus</taxon>
    </lineage>
</organism>
<name>TRPG_HAEIN</name>
<dbReference type="EC" id="4.1.3.27"/>
<dbReference type="EMBL" id="L42023">
    <property type="protein sequence ID" value="AAC23034.1"/>
    <property type="molecule type" value="Genomic_DNA"/>
</dbReference>
<dbReference type="PIR" id="D64121">
    <property type="entry name" value="D64121"/>
</dbReference>
<dbReference type="RefSeq" id="NP_439540.1">
    <property type="nucleotide sequence ID" value="NC_000907.1"/>
</dbReference>
<dbReference type="SMR" id="P71381"/>
<dbReference type="STRING" id="71421.HI_1388"/>
<dbReference type="EnsemblBacteria" id="AAC23034">
    <property type="protein sequence ID" value="AAC23034"/>
    <property type="gene ID" value="HI_1388"/>
</dbReference>
<dbReference type="KEGG" id="hin:HI_1388"/>
<dbReference type="PATRIC" id="fig|71421.8.peg.1445"/>
<dbReference type="eggNOG" id="COG0512">
    <property type="taxonomic scope" value="Bacteria"/>
</dbReference>
<dbReference type="HOGENOM" id="CLU_014340_1_0_6"/>
<dbReference type="OrthoDB" id="9806430at2"/>
<dbReference type="PhylomeDB" id="P71381"/>
<dbReference type="BioCyc" id="HINF71421:G1GJ1-1414-MONOMER"/>
<dbReference type="UniPathway" id="UPA00035">
    <property type="reaction ID" value="UER00040"/>
</dbReference>
<dbReference type="Proteomes" id="UP000000579">
    <property type="component" value="Chromosome"/>
</dbReference>
<dbReference type="GO" id="GO:0004048">
    <property type="term" value="F:anthranilate phosphoribosyltransferase activity"/>
    <property type="evidence" value="ECO:0000318"/>
    <property type="project" value="GO_Central"/>
</dbReference>
<dbReference type="GO" id="GO:0004049">
    <property type="term" value="F:anthranilate synthase activity"/>
    <property type="evidence" value="ECO:0007669"/>
    <property type="project" value="UniProtKB-EC"/>
</dbReference>
<dbReference type="GO" id="GO:0000162">
    <property type="term" value="P:L-tryptophan biosynthetic process"/>
    <property type="evidence" value="ECO:0000318"/>
    <property type="project" value="GO_Central"/>
</dbReference>
<dbReference type="GO" id="GO:0002047">
    <property type="term" value="P:phenazine biosynthetic process"/>
    <property type="evidence" value="ECO:0000318"/>
    <property type="project" value="GO_Central"/>
</dbReference>
<dbReference type="CDD" id="cd01743">
    <property type="entry name" value="GATase1_Anthranilate_Synthase"/>
    <property type="match status" value="1"/>
</dbReference>
<dbReference type="FunFam" id="3.40.50.880:FF:000003">
    <property type="entry name" value="Anthranilate synthase component II"/>
    <property type="match status" value="1"/>
</dbReference>
<dbReference type="Gene3D" id="3.40.50.880">
    <property type="match status" value="1"/>
</dbReference>
<dbReference type="InterPro" id="IPR050472">
    <property type="entry name" value="Anth_synth/Amidotransfase"/>
</dbReference>
<dbReference type="InterPro" id="IPR029062">
    <property type="entry name" value="Class_I_gatase-like"/>
</dbReference>
<dbReference type="InterPro" id="IPR017926">
    <property type="entry name" value="GATASE"/>
</dbReference>
<dbReference type="InterPro" id="IPR006221">
    <property type="entry name" value="TrpG/PapA_dom"/>
</dbReference>
<dbReference type="NCBIfam" id="TIGR00566">
    <property type="entry name" value="trpG_papA"/>
    <property type="match status" value="1"/>
</dbReference>
<dbReference type="PANTHER" id="PTHR43418:SF2">
    <property type="entry name" value="BIFUNCTIONAL PROTEIN TRPGD"/>
    <property type="match status" value="1"/>
</dbReference>
<dbReference type="PANTHER" id="PTHR43418">
    <property type="entry name" value="MULTIFUNCTIONAL TRYPTOPHAN BIOSYNTHESIS PROTEIN-RELATED"/>
    <property type="match status" value="1"/>
</dbReference>
<dbReference type="Pfam" id="PF00117">
    <property type="entry name" value="GATase"/>
    <property type="match status" value="1"/>
</dbReference>
<dbReference type="PRINTS" id="PR00097">
    <property type="entry name" value="ANTSNTHASEII"/>
</dbReference>
<dbReference type="PRINTS" id="PR00099">
    <property type="entry name" value="CPSGATASE"/>
</dbReference>
<dbReference type="PRINTS" id="PR00096">
    <property type="entry name" value="GATASE"/>
</dbReference>
<dbReference type="SUPFAM" id="SSF52317">
    <property type="entry name" value="Class I glutamine amidotransferase-like"/>
    <property type="match status" value="1"/>
</dbReference>
<dbReference type="PROSITE" id="PS51273">
    <property type="entry name" value="GATASE_TYPE_1"/>
    <property type="match status" value="1"/>
</dbReference>
<protein>
    <recommendedName>
        <fullName>Anthranilate synthase component 2</fullName>
        <shortName>AS</shortName>
        <shortName>ASII</shortName>
        <ecNumber>4.1.3.27</ecNumber>
    </recommendedName>
    <alternativeName>
        <fullName>Anthranilate synthase, GATase component</fullName>
    </alternativeName>
    <alternativeName>
        <fullName>Anthranilate synthase, glutamine amidotransferase component</fullName>
    </alternativeName>
</protein>
<reference key="1">
    <citation type="journal article" date="1995" name="Science">
        <title>Whole-genome random sequencing and assembly of Haemophilus influenzae Rd.</title>
        <authorList>
            <person name="Fleischmann R.D."/>
            <person name="Adams M.D."/>
            <person name="White O."/>
            <person name="Clayton R.A."/>
            <person name="Kirkness E.F."/>
            <person name="Kerlavage A.R."/>
            <person name="Bult C.J."/>
            <person name="Tomb J.-F."/>
            <person name="Dougherty B.A."/>
            <person name="Merrick J.M."/>
            <person name="McKenney K."/>
            <person name="Sutton G.G."/>
            <person name="FitzHugh W."/>
            <person name="Fields C.A."/>
            <person name="Gocayne J.D."/>
            <person name="Scott J.D."/>
            <person name="Shirley R."/>
            <person name="Liu L.-I."/>
            <person name="Glodek A."/>
            <person name="Kelley J.M."/>
            <person name="Weidman J.F."/>
            <person name="Phillips C.A."/>
            <person name="Spriggs T."/>
            <person name="Hedblom E."/>
            <person name="Cotton M.D."/>
            <person name="Utterback T.R."/>
            <person name="Hanna M.C."/>
            <person name="Nguyen D.T."/>
            <person name="Saudek D.M."/>
            <person name="Brandon R.C."/>
            <person name="Fine L.D."/>
            <person name="Fritchman J.L."/>
            <person name="Fuhrmann J.L."/>
            <person name="Geoghagen N.S.M."/>
            <person name="Gnehm C.L."/>
            <person name="McDonald L.A."/>
            <person name="Small K.V."/>
            <person name="Fraser C.M."/>
            <person name="Smith H.O."/>
            <person name="Venter J.C."/>
        </authorList>
    </citation>
    <scope>NUCLEOTIDE SEQUENCE [LARGE SCALE GENOMIC DNA]</scope>
    <source>
        <strain>ATCC 51907 / DSM 11121 / KW20 / Rd</strain>
    </source>
</reference>
<proteinExistence type="inferred from homology"/>